<reference key="1">
    <citation type="submission" date="2007-05" db="EMBL/GenBank/DDBJ databases">
        <title>Complete sequence of chromosome of Psychrobacter sp. PRwf-1.</title>
        <authorList>
            <consortium name="US DOE Joint Genome Institute"/>
            <person name="Copeland A."/>
            <person name="Lucas S."/>
            <person name="Lapidus A."/>
            <person name="Barry K."/>
            <person name="Detter J.C."/>
            <person name="Glavina del Rio T."/>
            <person name="Hammon N."/>
            <person name="Israni S."/>
            <person name="Dalin E."/>
            <person name="Tice H."/>
            <person name="Pitluck S."/>
            <person name="Chain P."/>
            <person name="Malfatti S."/>
            <person name="Shin M."/>
            <person name="Vergez L."/>
            <person name="Schmutz J."/>
            <person name="Larimer F."/>
            <person name="Land M."/>
            <person name="Hauser L."/>
            <person name="Kyrpides N."/>
            <person name="Kim E."/>
            <person name="Tiedje J."/>
            <person name="Richardson P."/>
        </authorList>
    </citation>
    <scope>NUCLEOTIDE SEQUENCE [LARGE SCALE GENOMIC DNA]</scope>
    <source>
        <strain>PRwf-1</strain>
    </source>
</reference>
<dbReference type="EC" id="2.1.1.192" evidence="1"/>
<dbReference type="EMBL" id="CP000713">
    <property type="protein sequence ID" value="ABQ94845.1"/>
    <property type="molecule type" value="Genomic_DNA"/>
</dbReference>
<dbReference type="SMR" id="A5WGQ4"/>
<dbReference type="STRING" id="349106.PsycPRwf_1905"/>
<dbReference type="KEGG" id="prw:PsycPRwf_1905"/>
<dbReference type="eggNOG" id="COG0820">
    <property type="taxonomic scope" value="Bacteria"/>
</dbReference>
<dbReference type="HOGENOM" id="CLU_029101_0_0_6"/>
<dbReference type="GO" id="GO:0005737">
    <property type="term" value="C:cytoplasm"/>
    <property type="evidence" value="ECO:0007669"/>
    <property type="project" value="UniProtKB-SubCell"/>
</dbReference>
<dbReference type="GO" id="GO:0051539">
    <property type="term" value="F:4 iron, 4 sulfur cluster binding"/>
    <property type="evidence" value="ECO:0007669"/>
    <property type="project" value="UniProtKB-UniRule"/>
</dbReference>
<dbReference type="GO" id="GO:0046872">
    <property type="term" value="F:metal ion binding"/>
    <property type="evidence" value="ECO:0007669"/>
    <property type="project" value="UniProtKB-KW"/>
</dbReference>
<dbReference type="GO" id="GO:0070040">
    <property type="term" value="F:rRNA (adenine(2503)-C2-)-methyltransferase activity"/>
    <property type="evidence" value="ECO:0007669"/>
    <property type="project" value="UniProtKB-UniRule"/>
</dbReference>
<dbReference type="GO" id="GO:0019843">
    <property type="term" value="F:rRNA binding"/>
    <property type="evidence" value="ECO:0007669"/>
    <property type="project" value="UniProtKB-UniRule"/>
</dbReference>
<dbReference type="GO" id="GO:0002935">
    <property type="term" value="F:tRNA (adenine(37)-C2)-methyltransferase activity"/>
    <property type="evidence" value="ECO:0007669"/>
    <property type="project" value="UniProtKB-UniRule"/>
</dbReference>
<dbReference type="GO" id="GO:0000049">
    <property type="term" value="F:tRNA binding"/>
    <property type="evidence" value="ECO:0007669"/>
    <property type="project" value="UniProtKB-UniRule"/>
</dbReference>
<dbReference type="GO" id="GO:0070475">
    <property type="term" value="P:rRNA base methylation"/>
    <property type="evidence" value="ECO:0007669"/>
    <property type="project" value="UniProtKB-UniRule"/>
</dbReference>
<dbReference type="GO" id="GO:0030488">
    <property type="term" value="P:tRNA methylation"/>
    <property type="evidence" value="ECO:0007669"/>
    <property type="project" value="UniProtKB-UniRule"/>
</dbReference>
<dbReference type="CDD" id="cd01335">
    <property type="entry name" value="Radical_SAM"/>
    <property type="match status" value="1"/>
</dbReference>
<dbReference type="FunFam" id="1.10.150.530:FF:000003">
    <property type="entry name" value="Dual-specificity RNA methyltransferase RlmN"/>
    <property type="match status" value="1"/>
</dbReference>
<dbReference type="FunFam" id="3.20.20.70:FF:000008">
    <property type="entry name" value="Dual-specificity RNA methyltransferase RlmN"/>
    <property type="match status" value="1"/>
</dbReference>
<dbReference type="Gene3D" id="1.10.150.530">
    <property type="match status" value="1"/>
</dbReference>
<dbReference type="Gene3D" id="3.20.20.70">
    <property type="entry name" value="Aldolase class I"/>
    <property type="match status" value="1"/>
</dbReference>
<dbReference type="HAMAP" id="MF_01849">
    <property type="entry name" value="RNA_methyltr_RlmN"/>
    <property type="match status" value="1"/>
</dbReference>
<dbReference type="InterPro" id="IPR013785">
    <property type="entry name" value="Aldolase_TIM"/>
</dbReference>
<dbReference type="InterPro" id="IPR040072">
    <property type="entry name" value="Methyltransferase_A"/>
</dbReference>
<dbReference type="InterPro" id="IPR048641">
    <property type="entry name" value="RlmN_N"/>
</dbReference>
<dbReference type="InterPro" id="IPR027492">
    <property type="entry name" value="RNA_MTrfase_RlmN"/>
</dbReference>
<dbReference type="InterPro" id="IPR004383">
    <property type="entry name" value="rRNA_lsu_MTrfase_RlmN/Cfr"/>
</dbReference>
<dbReference type="InterPro" id="IPR007197">
    <property type="entry name" value="rSAM"/>
</dbReference>
<dbReference type="NCBIfam" id="TIGR00048">
    <property type="entry name" value="rRNA_mod_RlmN"/>
    <property type="match status" value="1"/>
</dbReference>
<dbReference type="PANTHER" id="PTHR30544">
    <property type="entry name" value="23S RRNA METHYLTRANSFERASE"/>
    <property type="match status" value="1"/>
</dbReference>
<dbReference type="PANTHER" id="PTHR30544:SF5">
    <property type="entry name" value="RADICAL SAM CORE DOMAIN-CONTAINING PROTEIN"/>
    <property type="match status" value="1"/>
</dbReference>
<dbReference type="Pfam" id="PF04055">
    <property type="entry name" value="Radical_SAM"/>
    <property type="match status" value="1"/>
</dbReference>
<dbReference type="Pfam" id="PF21016">
    <property type="entry name" value="RlmN_N"/>
    <property type="match status" value="1"/>
</dbReference>
<dbReference type="PIRSF" id="PIRSF006004">
    <property type="entry name" value="CHP00048"/>
    <property type="match status" value="1"/>
</dbReference>
<dbReference type="SFLD" id="SFLDF00275">
    <property type="entry name" value="adenosine_C2_methyltransferase"/>
    <property type="match status" value="1"/>
</dbReference>
<dbReference type="SFLD" id="SFLDG01062">
    <property type="entry name" value="methyltransferase_(Class_A)"/>
    <property type="match status" value="1"/>
</dbReference>
<dbReference type="SUPFAM" id="SSF102114">
    <property type="entry name" value="Radical SAM enzymes"/>
    <property type="match status" value="1"/>
</dbReference>
<dbReference type="PROSITE" id="PS51918">
    <property type="entry name" value="RADICAL_SAM"/>
    <property type="match status" value="1"/>
</dbReference>
<proteinExistence type="inferred from homology"/>
<protein>
    <recommendedName>
        <fullName evidence="1">Dual-specificity RNA methyltransferase RlmN</fullName>
        <ecNumber evidence="1">2.1.1.192</ecNumber>
    </recommendedName>
    <alternativeName>
        <fullName evidence="1">23S rRNA (adenine(2503)-C(2))-methyltransferase</fullName>
    </alternativeName>
    <alternativeName>
        <fullName evidence="1">23S rRNA m2A2503 methyltransferase</fullName>
    </alternativeName>
    <alternativeName>
        <fullName evidence="1">Ribosomal RNA large subunit methyltransferase N</fullName>
    </alternativeName>
    <alternativeName>
        <fullName evidence="1">tRNA (adenine(37)-C(2))-methyltransferase</fullName>
    </alternativeName>
    <alternativeName>
        <fullName evidence="1">tRNA m2A37 methyltransferase</fullName>
    </alternativeName>
</protein>
<comment type="function">
    <text evidence="1">Specifically methylates position 2 of adenine 2503 in 23S rRNA and position 2 of adenine 37 in tRNAs. m2A2503 modification seems to play a crucial role in the proofreading step occurring at the peptidyl transferase center and thus would serve to optimize ribosomal fidelity.</text>
</comment>
<comment type="catalytic activity">
    <reaction evidence="1">
        <text>adenosine(2503) in 23S rRNA + 2 reduced [2Fe-2S]-[ferredoxin] + 2 S-adenosyl-L-methionine = 2-methyladenosine(2503) in 23S rRNA + 5'-deoxyadenosine + L-methionine + 2 oxidized [2Fe-2S]-[ferredoxin] + S-adenosyl-L-homocysteine</text>
        <dbReference type="Rhea" id="RHEA:42916"/>
        <dbReference type="Rhea" id="RHEA-COMP:10000"/>
        <dbReference type="Rhea" id="RHEA-COMP:10001"/>
        <dbReference type="Rhea" id="RHEA-COMP:10152"/>
        <dbReference type="Rhea" id="RHEA-COMP:10282"/>
        <dbReference type="ChEBI" id="CHEBI:17319"/>
        <dbReference type="ChEBI" id="CHEBI:33737"/>
        <dbReference type="ChEBI" id="CHEBI:33738"/>
        <dbReference type="ChEBI" id="CHEBI:57844"/>
        <dbReference type="ChEBI" id="CHEBI:57856"/>
        <dbReference type="ChEBI" id="CHEBI:59789"/>
        <dbReference type="ChEBI" id="CHEBI:74411"/>
        <dbReference type="ChEBI" id="CHEBI:74497"/>
        <dbReference type="EC" id="2.1.1.192"/>
    </reaction>
</comment>
<comment type="catalytic activity">
    <reaction evidence="1">
        <text>adenosine(37) in tRNA + 2 reduced [2Fe-2S]-[ferredoxin] + 2 S-adenosyl-L-methionine = 2-methyladenosine(37) in tRNA + 5'-deoxyadenosine + L-methionine + 2 oxidized [2Fe-2S]-[ferredoxin] + S-adenosyl-L-homocysteine</text>
        <dbReference type="Rhea" id="RHEA:43332"/>
        <dbReference type="Rhea" id="RHEA-COMP:10000"/>
        <dbReference type="Rhea" id="RHEA-COMP:10001"/>
        <dbReference type="Rhea" id="RHEA-COMP:10162"/>
        <dbReference type="Rhea" id="RHEA-COMP:10485"/>
        <dbReference type="ChEBI" id="CHEBI:17319"/>
        <dbReference type="ChEBI" id="CHEBI:33737"/>
        <dbReference type="ChEBI" id="CHEBI:33738"/>
        <dbReference type="ChEBI" id="CHEBI:57844"/>
        <dbReference type="ChEBI" id="CHEBI:57856"/>
        <dbReference type="ChEBI" id="CHEBI:59789"/>
        <dbReference type="ChEBI" id="CHEBI:74411"/>
        <dbReference type="ChEBI" id="CHEBI:74497"/>
        <dbReference type="EC" id="2.1.1.192"/>
    </reaction>
</comment>
<comment type="cofactor">
    <cofactor evidence="1">
        <name>[4Fe-4S] cluster</name>
        <dbReference type="ChEBI" id="CHEBI:49883"/>
    </cofactor>
    <text evidence="1">Binds 1 [4Fe-4S] cluster. The cluster is coordinated with 3 cysteines and an exchangeable S-adenosyl-L-methionine.</text>
</comment>
<comment type="subcellular location">
    <subcellularLocation>
        <location evidence="1">Cytoplasm</location>
    </subcellularLocation>
</comment>
<comment type="miscellaneous">
    <text evidence="1">Reaction proceeds by a ping-pong mechanism involving intermediate methylation of a conserved cysteine residue.</text>
</comment>
<comment type="similarity">
    <text evidence="1">Belongs to the radical SAM superfamily. RlmN family.</text>
</comment>
<feature type="chain" id="PRO_0000350351" description="Dual-specificity RNA methyltransferase RlmN">
    <location>
        <begin position="1"/>
        <end position="403"/>
    </location>
</feature>
<feature type="domain" description="Radical SAM core" evidence="2">
    <location>
        <begin position="123"/>
        <end position="364"/>
    </location>
</feature>
<feature type="region of interest" description="Disordered" evidence="3">
    <location>
        <begin position="1"/>
        <end position="25"/>
    </location>
</feature>
<feature type="active site" description="Proton acceptor" evidence="1">
    <location>
        <position position="112"/>
    </location>
</feature>
<feature type="active site" description="S-methylcysteine intermediate" evidence="1">
    <location>
        <position position="370"/>
    </location>
</feature>
<feature type="binding site" evidence="1">
    <location>
        <position position="137"/>
    </location>
    <ligand>
        <name>[4Fe-4S] cluster</name>
        <dbReference type="ChEBI" id="CHEBI:49883"/>
        <note>4Fe-4S-S-AdoMet</note>
    </ligand>
</feature>
<feature type="binding site" evidence="1">
    <location>
        <position position="141"/>
    </location>
    <ligand>
        <name>[4Fe-4S] cluster</name>
        <dbReference type="ChEBI" id="CHEBI:49883"/>
        <note>4Fe-4S-S-AdoMet</note>
    </ligand>
</feature>
<feature type="binding site" evidence="1">
    <location>
        <position position="144"/>
    </location>
    <ligand>
        <name>[4Fe-4S] cluster</name>
        <dbReference type="ChEBI" id="CHEBI:49883"/>
        <note>4Fe-4S-S-AdoMet</note>
    </ligand>
</feature>
<feature type="binding site" evidence="1">
    <location>
        <begin position="193"/>
        <end position="194"/>
    </location>
    <ligand>
        <name>S-adenosyl-L-methionine</name>
        <dbReference type="ChEBI" id="CHEBI:59789"/>
    </ligand>
</feature>
<feature type="binding site" evidence="1">
    <location>
        <position position="225"/>
    </location>
    <ligand>
        <name>S-adenosyl-L-methionine</name>
        <dbReference type="ChEBI" id="CHEBI:59789"/>
    </ligand>
</feature>
<feature type="binding site" evidence="1">
    <location>
        <begin position="247"/>
        <end position="249"/>
    </location>
    <ligand>
        <name>S-adenosyl-L-methionine</name>
        <dbReference type="ChEBI" id="CHEBI:59789"/>
    </ligand>
</feature>
<feature type="binding site" evidence="1">
    <location>
        <position position="327"/>
    </location>
    <ligand>
        <name>S-adenosyl-L-methionine</name>
        <dbReference type="ChEBI" id="CHEBI:59789"/>
    </ligand>
</feature>
<feature type="disulfide bond" description="(transient)" evidence="1">
    <location>
        <begin position="130"/>
        <end position="370"/>
    </location>
</feature>
<organism>
    <name type="scientific">Psychrobacter sp. (strain PRwf-1)</name>
    <dbReference type="NCBI Taxonomy" id="349106"/>
    <lineage>
        <taxon>Bacteria</taxon>
        <taxon>Pseudomonadati</taxon>
        <taxon>Pseudomonadota</taxon>
        <taxon>Gammaproteobacteria</taxon>
        <taxon>Moraxellales</taxon>
        <taxon>Moraxellaceae</taxon>
        <taxon>Psychrobacter</taxon>
    </lineage>
</organism>
<evidence type="ECO:0000255" key="1">
    <source>
        <dbReference type="HAMAP-Rule" id="MF_01849"/>
    </source>
</evidence>
<evidence type="ECO:0000255" key="2">
    <source>
        <dbReference type="PROSITE-ProRule" id="PRU01266"/>
    </source>
</evidence>
<evidence type="ECO:0000256" key="3">
    <source>
        <dbReference type="SAM" id="MobiDB-lite"/>
    </source>
</evidence>
<keyword id="KW-0004">4Fe-4S</keyword>
<keyword id="KW-0963">Cytoplasm</keyword>
<keyword id="KW-1015">Disulfide bond</keyword>
<keyword id="KW-0408">Iron</keyword>
<keyword id="KW-0411">Iron-sulfur</keyword>
<keyword id="KW-0479">Metal-binding</keyword>
<keyword id="KW-0489">Methyltransferase</keyword>
<keyword id="KW-0698">rRNA processing</keyword>
<keyword id="KW-0949">S-adenosyl-L-methionine</keyword>
<keyword id="KW-0808">Transferase</keyword>
<keyword id="KW-0819">tRNA processing</keyword>
<name>RLMN_PSYWF</name>
<accession>A5WGQ4</accession>
<sequence length="403" mass="44623">MTKIPMQPADSTPATFHPNAPTKTNILGMNQEQLGAYFKHIGEKPFRATQVMKWIYQHGVTDFAQMTNLSKGLREKLSEQACIELPEVMHKEFSEDGTRKWVFKVAGGSLVETVLIPADDSKVNGRKTLCISSQVGCALDCSFCSTGKQGFERDLTAAEIIGQLWVANASYMEGVDSTEWQNNVTNVVMMGMGEPLLNYTPVVSSMGLMLSDHAYGLSKRRVTLSTSGVVPKMYELYKDIDVALAISLHAPNDELRNELVPINKKYPLSELIAAAKAYVHDNNPRHKKHVTIEYVMLAGVNDSDEHAQQLVALLDGLPSKINLIPFNPFPHAPYDRSSNNRIHAFSNILNNAGFVCTIRQTRGDDIDAACGQLVGQVADRTRRSAKWQQSIKQRAANEQQSEG</sequence>
<gene>
    <name evidence="1" type="primary">rlmN</name>
    <name type="ordered locus">PsycPRwf_1905</name>
</gene>